<feature type="chain" id="PRO_0000117215" description="tRNA uridine 5-carboxymethylaminomethyl modification enzyme MnmG">
    <location>
        <begin position="1"/>
        <end position="677"/>
    </location>
</feature>
<feature type="binding site" evidence="1">
    <location>
        <begin position="10"/>
        <end position="15"/>
    </location>
    <ligand>
        <name>FAD</name>
        <dbReference type="ChEBI" id="CHEBI:57692"/>
    </ligand>
</feature>
<feature type="binding site" evidence="1">
    <location>
        <begin position="273"/>
        <end position="287"/>
    </location>
    <ligand>
        <name>NAD(+)</name>
        <dbReference type="ChEBI" id="CHEBI:57540"/>
    </ligand>
</feature>
<evidence type="ECO:0000255" key="1">
    <source>
        <dbReference type="HAMAP-Rule" id="MF_00129"/>
    </source>
</evidence>
<gene>
    <name evidence="1" type="primary">mnmG</name>
    <name evidence="1" type="synonym">gidA</name>
    <name type="ordered locus">Wbm0611</name>
</gene>
<proteinExistence type="inferred from homology"/>
<keyword id="KW-0963">Cytoplasm</keyword>
<keyword id="KW-0274">FAD</keyword>
<keyword id="KW-0285">Flavoprotein</keyword>
<keyword id="KW-0520">NAD</keyword>
<keyword id="KW-1185">Reference proteome</keyword>
<keyword id="KW-0819">tRNA processing</keyword>
<organism>
    <name type="scientific">Wolbachia sp. subsp. Brugia malayi (strain TRS)</name>
    <dbReference type="NCBI Taxonomy" id="292805"/>
    <lineage>
        <taxon>Bacteria</taxon>
        <taxon>Pseudomonadati</taxon>
        <taxon>Pseudomonadota</taxon>
        <taxon>Alphaproteobacteria</taxon>
        <taxon>Rickettsiales</taxon>
        <taxon>Anaplasmataceae</taxon>
        <taxon>Wolbachieae</taxon>
        <taxon>Wolbachia</taxon>
    </lineage>
</organism>
<accession>Q5GS25</accession>
<protein>
    <recommendedName>
        <fullName evidence="1">tRNA uridine 5-carboxymethylaminomethyl modification enzyme MnmG</fullName>
    </recommendedName>
    <alternativeName>
        <fullName evidence="1">Glucose-inhibited division protein A</fullName>
    </alternativeName>
</protein>
<dbReference type="EMBL" id="AE017321">
    <property type="protein sequence ID" value="AAW71199.1"/>
    <property type="molecule type" value="Genomic_DNA"/>
</dbReference>
<dbReference type="RefSeq" id="WP_011256809.1">
    <property type="nucleotide sequence ID" value="NC_006833.1"/>
</dbReference>
<dbReference type="SMR" id="Q5GS25"/>
<dbReference type="STRING" id="292805.Wbm0611"/>
<dbReference type="KEGG" id="wbm:Wbm0611"/>
<dbReference type="eggNOG" id="COG0445">
    <property type="taxonomic scope" value="Bacteria"/>
</dbReference>
<dbReference type="HOGENOM" id="CLU_007831_2_2_5"/>
<dbReference type="Proteomes" id="UP000000534">
    <property type="component" value="Chromosome"/>
</dbReference>
<dbReference type="GO" id="GO:0005829">
    <property type="term" value="C:cytosol"/>
    <property type="evidence" value="ECO:0007669"/>
    <property type="project" value="TreeGrafter"/>
</dbReference>
<dbReference type="GO" id="GO:0050660">
    <property type="term" value="F:flavin adenine dinucleotide binding"/>
    <property type="evidence" value="ECO:0007669"/>
    <property type="project" value="UniProtKB-UniRule"/>
</dbReference>
<dbReference type="GO" id="GO:0030488">
    <property type="term" value="P:tRNA methylation"/>
    <property type="evidence" value="ECO:0007669"/>
    <property type="project" value="TreeGrafter"/>
</dbReference>
<dbReference type="GO" id="GO:0002098">
    <property type="term" value="P:tRNA wobble uridine modification"/>
    <property type="evidence" value="ECO:0007669"/>
    <property type="project" value="InterPro"/>
</dbReference>
<dbReference type="FunFam" id="3.50.50.60:FF:000145">
    <property type="entry name" value="tRNA uridine 5-carboxymethylaminomethyl modification enzyme"/>
    <property type="match status" value="1"/>
</dbReference>
<dbReference type="FunFam" id="1.10.150.570:FF:000001">
    <property type="entry name" value="tRNA uridine 5-carboxymethylaminomethyl modification enzyme MnmG"/>
    <property type="match status" value="1"/>
</dbReference>
<dbReference type="FunFam" id="3.50.50.60:FF:000002">
    <property type="entry name" value="tRNA uridine 5-carboxymethylaminomethyl modification enzyme MnmG"/>
    <property type="match status" value="1"/>
</dbReference>
<dbReference type="Gene3D" id="3.50.50.60">
    <property type="entry name" value="FAD/NAD(P)-binding domain"/>
    <property type="match status" value="2"/>
</dbReference>
<dbReference type="Gene3D" id="1.10.150.570">
    <property type="entry name" value="GidA associated domain, C-terminal subdomain"/>
    <property type="match status" value="1"/>
</dbReference>
<dbReference type="HAMAP" id="MF_00129">
    <property type="entry name" value="MnmG_GidA"/>
    <property type="match status" value="1"/>
</dbReference>
<dbReference type="InterPro" id="IPR036188">
    <property type="entry name" value="FAD/NAD-bd_sf"/>
</dbReference>
<dbReference type="InterPro" id="IPR049312">
    <property type="entry name" value="GIDA_C_N"/>
</dbReference>
<dbReference type="InterPro" id="IPR004416">
    <property type="entry name" value="MnmG"/>
</dbReference>
<dbReference type="InterPro" id="IPR002218">
    <property type="entry name" value="MnmG-rel"/>
</dbReference>
<dbReference type="InterPro" id="IPR020595">
    <property type="entry name" value="MnmG-rel_CS"/>
</dbReference>
<dbReference type="InterPro" id="IPR026904">
    <property type="entry name" value="MnmG_C"/>
</dbReference>
<dbReference type="InterPro" id="IPR047001">
    <property type="entry name" value="MnmG_C_subdom"/>
</dbReference>
<dbReference type="InterPro" id="IPR044920">
    <property type="entry name" value="MnmG_C_subdom_sf"/>
</dbReference>
<dbReference type="InterPro" id="IPR040131">
    <property type="entry name" value="MnmG_N"/>
</dbReference>
<dbReference type="NCBIfam" id="TIGR00136">
    <property type="entry name" value="mnmG_gidA"/>
    <property type="match status" value="1"/>
</dbReference>
<dbReference type="PANTHER" id="PTHR11806">
    <property type="entry name" value="GLUCOSE INHIBITED DIVISION PROTEIN A"/>
    <property type="match status" value="1"/>
</dbReference>
<dbReference type="PANTHER" id="PTHR11806:SF0">
    <property type="entry name" value="PROTEIN MTO1 HOMOLOG, MITOCHONDRIAL"/>
    <property type="match status" value="1"/>
</dbReference>
<dbReference type="Pfam" id="PF01134">
    <property type="entry name" value="GIDA"/>
    <property type="match status" value="1"/>
</dbReference>
<dbReference type="Pfam" id="PF21680">
    <property type="entry name" value="GIDA_C_1st"/>
    <property type="match status" value="1"/>
</dbReference>
<dbReference type="Pfam" id="PF13932">
    <property type="entry name" value="SAM_GIDA_C"/>
    <property type="match status" value="1"/>
</dbReference>
<dbReference type="SMART" id="SM01228">
    <property type="entry name" value="GIDA_assoc_3"/>
    <property type="match status" value="1"/>
</dbReference>
<dbReference type="SUPFAM" id="SSF51905">
    <property type="entry name" value="FAD/NAD(P)-binding domain"/>
    <property type="match status" value="1"/>
</dbReference>
<dbReference type="PROSITE" id="PS01280">
    <property type="entry name" value="GIDA_1"/>
    <property type="match status" value="1"/>
</dbReference>
<dbReference type="PROSITE" id="PS01281">
    <property type="entry name" value="GIDA_2"/>
    <property type="match status" value="1"/>
</dbReference>
<sequence length="677" mass="75345">MHRYDVVVVGGGHAGCEAAAAAARLGASTLLITHKISTIGEMSCNPAIGGVAKGIVVREVDALDGIMGRAIDQASIHSVILNSSRGAAVWGPRAQADRKLYKKAIQEIILNHDNLTVKEESVDDFLIESNSNGEPYIKAIITSSGKQILTSKVVLTTGTFLQGMVHIGEQTTPSGRMGDKSAVELANTLKKYDFKLGRLRTGTPPRLDRSTINWSILEEQVGNNPPMPFSYLTEKINQPQVSCFITYTNENTHRIIQANLHRSASSYLNDIVAPRYCPSIEAKVKKFAEKNSHQIFLEPEGLDNITVYPNGISNSLPIEVQREMINSIKGLENAEILRPGYAVEYDYIDPRELFHTLETKKVKGLYFAGQINGTTGYEEAAGQGIIAGINAALSASQKKESFVLHRTDSYIGVMIDDLVTKGVTEPYRLFTSRAEYRLAIRSDNADRRLTQKGYNISLVSYKRYSALQNKLKSIKQLEEKLESLKITPEQLRFCGIKISHDGIRKTALDLLSYPNIDWNKLQEIWPELTNVTRWNDNKADQTVIQVVDTRIQKKNADSSVTRWNDKTGYWNDSKTTSNTIKNEICEAVAIEAKYKPYLVRQEADMKFLREEMNTQIPTNFNYSQIKGLSSEVIEKLQAIKPATIGIAKQIQGITPAAIVSILVYLRNRKTKVAANSA</sequence>
<comment type="function">
    <text evidence="1">NAD-binding protein involved in the addition of a carboxymethylaminomethyl (cmnm) group at the wobble position (U34) of certain tRNAs, forming tRNA-cmnm(5)s(2)U34.</text>
</comment>
<comment type="cofactor">
    <cofactor evidence="1">
        <name>FAD</name>
        <dbReference type="ChEBI" id="CHEBI:57692"/>
    </cofactor>
</comment>
<comment type="subunit">
    <text evidence="1">Homodimer. Heterotetramer of two MnmE and two MnmG subunits.</text>
</comment>
<comment type="subcellular location">
    <subcellularLocation>
        <location evidence="1">Cytoplasm</location>
    </subcellularLocation>
</comment>
<comment type="similarity">
    <text evidence="1">Belongs to the MnmG family.</text>
</comment>
<reference key="1">
    <citation type="journal article" date="2005" name="PLoS Biol.">
        <title>The Wolbachia genome of Brugia malayi: endosymbiont evolution within a human pathogenic nematode.</title>
        <authorList>
            <person name="Foster J."/>
            <person name="Ganatra M."/>
            <person name="Kamal I."/>
            <person name="Ware J."/>
            <person name="Makarova K."/>
            <person name="Ivanova N."/>
            <person name="Bhattacharyya A."/>
            <person name="Kapatral V."/>
            <person name="Kumar S."/>
            <person name="Posfai J."/>
            <person name="Vincze T."/>
            <person name="Ingram J."/>
            <person name="Moran L."/>
            <person name="Lapidus A."/>
            <person name="Omelchenko M."/>
            <person name="Kyrpides N."/>
            <person name="Ghedin E."/>
            <person name="Wang S."/>
            <person name="Goltsman E."/>
            <person name="Joukov V."/>
            <person name="Ostrovskaya O."/>
            <person name="Tsukerman K."/>
            <person name="Mazur M."/>
            <person name="Comb D."/>
            <person name="Koonin E."/>
            <person name="Slatko B."/>
        </authorList>
    </citation>
    <scope>NUCLEOTIDE SEQUENCE [LARGE SCALE GENOMIC DNA]</scope>
    <source>
        <strain>TRS</strain>
    </source>
</reference>
<name>MNMG_WOLTR</name>